<protein>
    <recommendedName>
        <fullName evidence="1">23S rRNA (uracil(1939)-C(5))-methyltransferase RlmD</fullName>
        <ecNumber evidence="1">2.1.1.190</ecNumber>
    </recommendedName>
    <alternativeName>
        <fullName evidence="1">23S rRNA(m5U1939)-methyltransferase</fullName>
    </alternativeName>
</protein>
<keyword id="KW-0004">4Fe-4S</keyword>
<keyword id="KW-0408">Iron</keyword>
<keyword id="KW-0411">Iron-sulfur</keyword>
<keyword id="KW-0479">Metal-binding</keyword>
<keyword id="KW-0489">Methyltransferase</keyword>
<keyword id="KW-1185">Reference proteome</keyword>
<keyword id="KW-0698">rRNA processing</keyword>
<keyword id="KW-0949">S-adenosyl-L-methionine</keyword>
<keyword id="KW-0808">Transferase</keyword>
<sequence>MQPTDSKTSTSDTTEQPNETQTITIPPSKKKSKPSSKTRRRLKDAEPLPFAIDGLSHDGRGVAVYGNGFVEADGHITDKHGKKIFVSFALPGESALVKITNSRTSFEEGDAVNITANPNPERVVPPCPHFGVCGGCNLQHWQPEAQINFKQSVLAEMLVHQANVAPDHWLEPVVGDRLGYRTKARLGVRYVAKKETALVGFRERSSNFLAELNECHILDPRIGFEIENLKTLISTLESRNKIAQLELAMGEYLPELPDGDQPVALIVRNLEPLSDADIDKLKVFFAARNWQLYLQPKGADSIQRIALTAADDLSEQFGRLYYQLPEYDLTFEFIPTDFTQVNLSVNRQMTKLACDLLDLKAGERVLDLFSGLGNFSLPLARLVGETGSVVGVEGSEAMTIRAADNARRNGINNTEFYSQDLTHDCTDKPWANQGFDALLIDPPRSGAWEIMQYLPKFNAERIVYVSCNPATLARDTKALLEQGYRLTHAGVMDMFCHTGHVESIARFEKVSA</sequence>
<organism>
    <name type="scientific">Psychrobacter arcticus (strain DSM 17307 / VKM B-2377 / 273-4)</name>
    <dbReference type="NCBI Taxonomy" id="259536"/>
    <lineage>
        <taxon>Bacteria</taxon>
        <taxon>Pseudomonadati</taxon>
        <taxon>Pseudomonadota</taxon>
        <taxon>Gammaproteobacteria</taxon>
        <taxon>Moraxellales</taxon>
        <taxon>Moraxellaceae</taxon>
        <taxon>Psychrobacter</taxon>
    </lineage>
</organism>
<feature type="chain" id="PRO_0000282054" description="23S rRNA (uracil(1939)-C(5))-methyltransferase RlmD">
    <location>
        <begin position="1"/>
        <end position="512"/>
    </location>
</feature>
<feature type="domain" description="TRAM" evidence="1">
    <location>
        <begin position="41"/>
        <end position="113"/>
    </location>
</feature>
<feature type="region of interest" description="Disordered" evidence="2">
    <location>
        <begin position="1"/>
        <end position="45"/>
    </location>
</feature>
<feature type="compositionally biased region" description="Low complexity" evidence="2">
    <location>
        <begin position="1"/>
        <end position="14"/>
    </location>
</feature>
<feature type="compositionally biased region" description="Polar residues" evidence="2">
    <location>
        <begin position="15"/>
        <end position="25"/>
    </location>
</feature>
<feature type="compositionally biased region" description="Basic residues" evidence="2">
    <location>
        <begin position="28"/>
        <end position="42"/>
    </location>
</feature>
<feature type="active site" description="Nucleophile" evidence="1">
    <location>
        <position position="467"/>
    </location>
</feature>
<feature type="binding site" evidence="1">
    <location>
        <position position="127"/>
    </location>
    <ligand>
        <name>[4Fe-4S] cluster</name>
        <dbReference type="ChEBI" id="CHEBI:49883"/>
    </ligand>
</feature>
<feature type="binding site" evidence="1">
    <location>
        <position position="133"/>
    </location>
    <ligand>
        <name>[4Fe-4S] cluster</name>
        <dbReference type="ChEBI" id="CHEBI:49883"/>
    </ligand>
</feature>
<feature type="binding site" evidence="1">
    <location>
        <position position="136"/>
    </location>
    <ligand>
        <name>[4Fe-4S] cluster</name>
        <dbReference type="ChEBI" id="CHEBI:49883"/>
    </ligand>
</feature>
<feature type="binding site" evidence="1">
    <location>
        <position position="215"/>
    </location>
    <ligand>
        <name>[4Fe-4S] cluster</name>
        <dbReference type="ChEBI" id="CHEBI:49883"/>
    </ligand>
</feature>
<feature type="binding site" evidence="1">
    <location>
        <position position="340"/>
    </location>
    <ligand>
        <name>S-adenosyl-L-methionine</name>
        <dbReference type="ChEBI" id="CHEBI:59789"/>
    </ligand>
</feature>
<feature type="binding site" evidence="1">
    <location>
        <position position="369"/>
    </location>
    <ligand>
        <name>S-adenosyl-L-methionine</name>
        <dbReference type="ChEBI" id="CHEBI:59789"/>
    </ligand>
</feature>
<feature type="binding site" evidence="1">
    <location>
        <position position="374"/>
    </location>
    <ligand>
        <name>S-adenosyl-L-methionine</name>
        <dbReference type="ChEBI" id="CHEBI:59789"/>
    </ligand>
</feature>
<feature type="binding site" evidence="1">
    <location>
        <position position="393"/>
    </location>
    <ligand>
        <name>S-adenosyl-L-methionine</name>
        <dbReference type="ChEBI" id="CHEBI:59789"/>
    </ligand>
</feature>
<feature type="binding site" evidence="1">
    <location>
        <position position="420"/>
    </location>
    <ligand>
        <name>S-adenosyl-L-methionine</name>
        <dbReference type="ChEBI" id="CHEBI:59789"/>
    </ligand>
</feature>
<feature type="binding site" evidence="1">
    <location>
        <position position="441"/>
    </location>
    <ligand>
        <name>S-adenosyl-L-methionine</name>
        <dbReference type="ChEBI" id="CHEBI:59789"/>
    </ligand>
</feature>
<reference key="1">
    <citation type="journal article" date="2010" name="Appl. Environ. Microbiol.">
        <title>The genome sequence of Psychrobacter arcticus 273-4, a psychroactive Siberian permafrost bacterium, reveals mechanisms for adaptation to low-temperature growth.</title>
        <authorList>
            <person name="Ayala-del-Rio H.L."/>
            <person name="Chain P.S."/>
            <person name="Grzymski J.J."/>
            <person name="Ponder M.A."/>
            <person name="Ivanova N."/>
            <person name="Bergholz P.W."/>
            <person name="Di Bartolo G."/>
            <person name="Hauser L."/>
            <person name="Land M."/>
            <person name="Bakermans C."/>
            <person name="Rodrigues D."/>
            <person name="Klappenbach J."/>
            <person name="Zarka D."/>
            <person name="Larimer F."/>
            <person name="Richardson P."/>
            <person name="Murray A."/>
            <person name="Thomashow M."/>
            <person name="Tiedje J.M."/>
        </authorList>
    </citation>
    <scope>NUCLEOTIDE SEQUENCE [LARGE SCALE GENOMIC DNA]</scope>
    <source>
        <strain>DSM 17307 / VKM B-2377 / 273-4</strain>
    </source>
</reference>
<accession>Q4FUU5</accession>
<gene>
    <name evidence="1" type="primary">rlmD</name>
    <name type="synonym">rumA</name>
    <name type="ordered locus">Psyc_0344</name>
</gene>
<evidence type="ECO:0000255" key="1">
    <source>
        <dbReference type="HAMAP-Rule" id="MF_01010"/>
    </source>
</evidence>
<evidence type="ECO:0000256" key="2">
    <source>
        <dbReference type="SAM" id="MobiDB-lite"/>
    </source>
</evidence>
<name>RLMD_PSYA2</name>
<proteinExistence type="inferred from homology"/>
<dbReference type="EC" id="2.1.1.190" evidence="1"/>
<dbReference type="EMBL" id="CP000082">
    <property type="protein sequence ID" value="AAZ18213.1"/>
    <property type="molecule type" value="Genomic_DNA"/>
</dbReference>
<dbReference type="RefSeq" id="WP_011279651.1">
    <property type="nucleotide sequence ID" value="NC_007204.1"/>
</dbReference>
<dbReference type="SMR" id="Q4FUU5"/>
<dbReference type="STRING" id="259536.Psyc_0344"/>
<dbReference type="KEGG" id="par:Psyc_0344"/>
<dbReference type="eggNOG" id="COG2265">
    <property type="taxonomic scope" value="Bacteria"/>
</dbReference>
<dbReference type="HOGENOM" id="CLU_014689_8_2_6"/>
<dbReference type="OrthoDB" id="9804590at2"/>
<dbReference type="Proteomes" id="UP000000546">
    <property type="component" value="Chromosome"/>
</dbReference>
<dbReference type="GO" id="GO:0051539">
    <property type="term" value="F:4 iron, 4 sulfur cluster binding"/>
    <property type="evidence" value="ECO:0007669"/>
    <property type="project" value="UniProtKB-KW"/>
</dbReference>
<dbReference type="GO" id="GO:0005506">
    <property type="term" value="F:iron ion binding"/>
    <property type="evidence" value="ECO:0007669"/>
    <property type="project" value="UniProtKB-UniRule"/>
</dbReference>
<dbReference type="GO" id="GO:0003723">
    <property type="term" value="F:RNA binding"/>
    <property type="evidence" value="ECO:0007669"/>
    <property type="project" value="InterPro"/>
</dbReference>
<dbReference type="GO" id="GO:0070041">
    <property type="term" value="F:rRNA (uridine-C5-)-methyltransferase activity"/>
    <property type="evidence" value="ECO:0007669"/>
    <property type="project" value="UniProtKB-UniRule"/>
</dbReference>
<dbReference type="GO" id="GO:0070475">
    <property type="term" value="P:rRNA base methylation"/>
    <property type="evidence" value="ECO:0007669"/>
    <property type="project" value="TreeGrafter"/>
</dbReference>
<dbReference type="CDD" id="cd02440">
    <property type="entry name" value="AdoMet_MTases"/>
    <property type="match status" value="1"/>
</dbReference>
<dbReference type="Gene3D" id="2.40.50.1070">
    <property type="match status" value="1"/>
</dbReference>
<dbReference type="Gene3D" id="2.40.50.140">
    <property type="entry name" value="Nucleic acid-binding proteins"/>
    <property type="match status" value="1"/>
</dbReference>
<dbReference type="Gene3D" id="3.40.50.150">
    <property type="entry name" value="Vaccinia Virus protein VP39"/>
    <property type="match status" value="1"/>
</dbReference>
<dbReference type="HAMAP" id="MF_01010">
    <property type="entry name" value="23SrRNA_methyltr_RlmD"/>
    <property type="match status" value="1"/>
</dbReference>
<dbReference type="InterPro" id="IPR001566">
    <property type="entry name" value="23S_rRNA_MeTrfase_RlmD"/>
</dbReference>
<dbReference type="InterPro" id="IPR030390">
    <property type="entry name" value="MeTrfase_TrmA_AS"/>
</dbReference>
<dbReference type="InterPro" id="IPR012340">
    <property type="entry name" value="NA-bd_OB-fold"/>
</dbReference>
<dbReference type="InterPro" id="IPR029063">
    <property type="entry name" value="SAM-dependent_MTases_sf"/>
</dbReference>
<dbReference type="InterPro" id="IPR002792">
    <property type="entry name" value="TRAM_dom"/>
</dbReference>
<dbReference type="InterPro" id="IPR010280">
    <property type="entry name" value="U5_MeTrfase_fam"/>
</dbReference>
<dbReference type="NCBIfam" id="NF009639">
    <property type="entry name" value="PRK13168.1"/>
    <property type="match status" value="1"/>
</dbReference>
<dbReference type="NCBIfam" id="TIGR00479">
    <property type="entry name" value="rumA"/>
    <property type="match status" value="1"/>
</dbReference>
<dbReference type="PANTHER" id="PTHR11061:SF49">
    <property type="entry name" value="23S RRNA (URACIL(1939)-C(5))-METHYLTRANSFERASE RLMD"/>
    <property type="match status" value="1"/>
</dbReference>
<dbReference type="PANTHER" id="PTHR11061">
    <property type="entry name" value="RNA M5U METHYLTRANSFERASE"/>
    <property type="match status" value="1"/>
</dbReference>
<dbReference type="Pfam" id="PF05958">
    <property type="entry name" value="tRNA_U5-meth_tr"/>
    <property type="match status" value="1"/>
</dbReference>
<dbReference type="SUPFAM" id="SSF50249">
    <property type="entry name" value="Nucleic acid-binding proteins"/>
    <property type="match status" value="1"/>
</dbReference>
<dbReference type="SUPFAM" id="SSF53335">
    <property type="entry name" value="S-adenosyl-L-methionine-dependent methyltransferases"/>
    <property type="match status" value="1"/>
</dbReference>
<dbReference type="PROSITE" id="PS51687">
    <property type="entry name" value="SAM_MT_RNA_M5U"/>
    <property type="match status" value="1"/>
</dbReference>
<dbReference type="PROSITE" id="PS50926">
    <property type="entry name" value="TRAM"/>
    <property type="match status" value="1"/>
</dbReference>
<dbReference type="PROSITE" id="PS01230">
    <property type="entry name" value="TRMA_1"/>
    <property type="match status" value="1"/>
</dbReference>
<comment type="function">
    <text evidence="1">Catalyzes the formation of 5-methyl-uridine at position 1939 (m5U1939) in 23S rRNA.</text>
</comment>
<comment type="catalytic activity">
    <reaction evidence="1">
        <text>uridine(1939) in 23S rRNA + S-adenosyl-L-methionine = 5-methyluridine(1939) in 23S rRNA + S-adenosyl-L-homocysteine + H(+)</text>
        <dbReference type="Rhea" id="RHEA:42908"/>
        <dbReference type="Rhea" id="RHEA-COMP:10278"/>
        <dbReference type="Rhea" id="RHEA-COMP:10279"/>
        <dbReference type="ChEBI" id="CHEBI:15378"/>
        <dbReference type="ChEBI" id="CHEBI:57856"/>
        <dbReference type="ChEBI" id="CHEBI:59789"/>
        <dbReference type="ChEBI" id="CHEBI:65315"/>
        <dbReference type="ChEBI" id="CHEBI:74447"/>
        <dbReference type="EC" id="2.1.1.190"/>
    </reaction>
</comment>
<comment type="similarity">
    <text evidence="1">Belongs to the class I-like SAM-binding methyltransferase superfamily. RNA M5U methyltransferase family. RlmD subfamily.</text>
</comment>